<proteinExistence type="inferred from homology"/>
<reference key="1">
    <citation type="journal article" date="2005" name="J. Bacteriol.">
        <title>Genomic sequence of an otitis media isolate of nontypeable Haemophilus influenzae: comparative study with H. influenzae serotype d, strain KW20.</title>
        <authorList>
            <person name="Harrison A."/>
            <person name="Dyer D.W."/>
            <person name="Gillaspy A."/>
            <person name="Ray W.C."/>
            <person name="Mungur R."/>
            <person name="Carson M.B."/>
            <person name="Zhong H."/>
            <person name="Gipson J."/>
            <person name="Gipson M."/>
            <person name="Johnson L.S."/>
            <person name="Lewis L."/>
            <person name="Bakaletz L.O."/>
            <person name="Munson R.S. Jr."/>
        </authorList>
    </citation>
    <scope>NUCLEOTIDE SEQUENCE [LARGE SCALE GENOMIC DNA]</scope>
    <source>
        <strain>86-028NP</strain>
    </source>
</reference>
<protein>
    <recommendedName>
        <fullName evidence="1">Putative membrane protein insertion efficiency factor</fullName>
    </recommendedName>
</protein>
<evidence type="ECO:0000255" key="1">
    <source>
        <dbReference type="HAMAP-Rule" id="MF_00386"/>
    </source>
</evidence>
<feature type="chain" id="PRO_0000253112" description="Putative membrane protein insertion efficiency factor">
    <location>
        <begin position="1"/>
        <end position="86"/>
    </location>
</feature>
<dbReference type="EMBL" id="CP000057">
    <property type="protein sequence ID" value="AAX88036.1"/>
    <property type="molecule type" value="Genomic_DNA"/>
</dbReference>
<dbReference type="KEGG" id="hit:NTHI1174"/>
<dbReference type="HOGENOM" id="CLU_144811_5_2_6"/>
<dbReference type="Proteomes" id="UP000002525">
    <property type="component" value="Chromosome"/>
</dbReference>
<dbReference type="GO" id="GO:0005886">
    <property type="term" value="C:plasma membrane"/>
    <property type="evidence" value="ECO:0007669"/>
    <property type="project" value="UniProtKB-SubCell"/>
</dbReference>
<dbReference type="HAMAP" id="MF_00386">
    <property type="entry name" value="UPF0161_YidD"/>
    <property type="match status" value="1"/>
</dbReference>
<dbReference type="InterPro" id="IPR002696">
    <property type="entry name" value="Membr_insert_effic_factor_YidD"/>
</dbReference>
<dbReference type="NCBIfam" id="TIGR00278">
    <property type="entry name" value="membrane protein insertion efficiency factor YidD"/>
    <property type="match status" value="1"/>
</dbReference>
<dbReference type="PANTHER" id="PTHR33383">
    <property type="entry name" value="MEMBRANE PROTEIN INSERTION EFFICIENCY FACTOR-RELATED"/>
    <property type="match status" value="1"/>
</dbReference>
<dbReference type="PANTHER" id="PTHR33383:SF1">
    <property type="entry name" value="MEMBRANE PROTEIN INSERTION EFFICIENCY FACTOR-RELATED"/>
    <property type="match status" value="1"/>
</dbReference>
<dbReference type="Pfam" id="PF01809">
    <property type="entry name" value="YidD"/>
    <property type="match status" value="1"/>
</dbReference>
<dbReference type="SMART" id="SM01234">
    <property type="entry name" value="Haemolytic"/>
    <property type="match status" value="1"/>
</dbReference>
<gene>
    <name type="ordered locus">NTHI1174</name>
</gene>
<comment type="function">
    <text evidence="1">Could be involved in insertion of integral membrane proteins into the membrane.</text>
</comment>
<comment type="subcellular location">
    <subcellularLocation>
        <location evidence="1">Cell inner membrane</location>
        <topology evidence="1">Peripheral membrane protein</topology>
        <orientation evidence="1">Cytoplasmic side</orientation>
    </subcellularLocation>
</comment>
<comment type="similarity">
    <text evidence="1">Belongs to the UPF0161 family.</text>
</comment>
<organism>
    <name type="scientific">Haemophilus influenzae (strain 86-028NP)</name>
    <dbReference type="NCBI Taxonomy" id="281310"/>
    <lineage>
        <taxon>Bacteria</taxon>
        <taxon>Pseudomonadati</taxon>
        <taxon>Pseudomonadota</taxon>
        <taxon>Gammaproteobacteria</taxon>
        <taxon>Pasteurellales</taxon>
        <taxon>Pasteurellaceae</taxon>
        <taxon>Haemophilus</taxon>
    </lineage>
</organism>
<keyword id="KW-0997">Cell inner membrane</keyword>
<keyword id="KW-1003">Cell membrane</keyword>
<keyword id="KW-0472">Membrane</keyword>
<name>YIDD_HAEI8</name>
<accession>Q4QLR1</accession>
<sequence>MAETHSLGTKILIKIIRLYQIMISPFIGARCRFVPTCSCYGIEALKTHGLLKGGWLTLKRVLKCHPLNAGGFDPVPPKTNNNDEKK</sequence>